<feature type="signal peptide" evidence="3">
    <location>
        <begin position="1"/>
        <end position="23"/>
    </location>
</feature>
<feature type="chain" id="PRO_0000294367" description="Leukocyte immunoglobulin-like receptor subfamily A member 6">
    <location>
        <begin position="24"/>
        <end position="481"/>
    </location>
</feature>
<feature type="topological domain" description="Extracellular" evidence="3">
    <location>
        <begin position="24"/>
        <end position="447"/>
    </location>
</feature>
<feature type="transmembrane region" description="Helical" evidence="3">
    <location>
        <begin position="448"/>
        <end position="468"/>
    </location>
</feature>
<feature type="topological domain" description="Cytoplasmic" evidence="3">
    <location>
        <begin position="469"/>
        <end position="481"/>
    </location>
</feature>
<feature type="domain" description="Ig-like C2-type 1">
    <location>
        <begin position="225"/>
        <end position="314"/>
    </location>
</feature>
<feature type="domain" description="Ig-like C2-type 2">
    <location>
        <begin position="323"/>
        <end position="408"/>
    </location>
</feature>
<feature type="region of interest" description="Disordered" evidence="5">
    <location>
        <begin position="59"/>
        <end position="78"/>
    </location>
</feature>
<feature type="region of interest" description="Disordered" evidence="5">
    <location>
        <begin position="419"/>
        <end position="439"/>
    </location>
</feature>
<feature type="compositionally biased region" description="Basic and acidic residues" evidence="5">
    <location>
        <begin position="59"/>
        <end position="70"/>
    </location>
</feature>
<feature type="glycosylation site" description="N-linked (GlcNAc...) asparagine" evidence="3">
    <location>
        <position position="139"/>
    </location>
</feature>
<feature type="glycosylation site" description="N-linked (GlcNAc...) asparagine" evidence="3">
    <location>
        <position position="301"/>
    </location>
</feature>
<feature type="glycosylation site" description="N-linked (GlcNAc...) asparagine" evidence="3">
    <location>
        <position position="340"/>
    </location>
</feature>
<feature type="disulfide bond" evidence="2">
    <location>
        <begin position="49"/>
        <end position="98"/>
    </location>
</feature>
<feature type="disulfide bond" evidence="2">
    <location>
        <begin position="144"/>
        <end position="196"/>
    </location>
</feature>
<feature type="disulfide bond" evidence="4">
    <location>
        <begin position="245"/>
        <end position="296"/>
    </location>
</feature>
<feature type="disulfide bond" evidence="4">
    <location>
        <begin position="345"/>
        <end position="396"/>
    </location>
</feature>
<feature type="splice variant" id="VSP_038149" description="In isoform 2." evidence="6">
    <original>WR</original>
    <variation>RV</variation>
    <location>
        <begin position="192"/>
        <end position="193"/>
    </location>
</feature>
<feature type="splice variant" id="VSP_038150" description="In isoform 2." evidence="6">
    <location>
        <begin position="194"/>
        <end position="481"/>
    </location>
</feature>
<feature type="sequence variant" id="VAR_033170" description="In dbSNP:rs620207.">
    <original>L</original>
    <variation>W</variation>
    <location>
        <position position="69"/>
    </location>
</feature>
<feature type="sequence variant" id="VAR_033171" description="In dbSNP:rs1052966.">
    <original>G</original>
    <variation>R</variation>
    <location>
        <position position="149"/>
    </location>
</feature>
<feature type="sequence variant" id="VAR_033172" description="In dbSNP:rs1052975.">
    <original>P</original>
    <variation>R</variation>
    <location>
        <position position="288"/>
    </location>
</feature>
<feature type="sequence variant" id="VAR_033173" description="In dbSNP:rs8104206.">
    <original>Y</original>
    <variation>H</variation>
    <location>
        <position position="400"/>
    </location>
</feature>
<feature type="strand" evidence="8">
    <location>
        <begin position="30"/>
        <end position="35"/>
    </location>
</feature>
<feature type="strand" evidence="8">
    <location>
        <begin position="37"/>
        <end position="39"/>
    </location>
</feature>
<feature type="strand" evidence="8">
    <location>
        <begin position="45"/>
        <end position="50"/>
    </location>
</feature>
<feature type="strand" evidence="8">
    <location>
        <begin position="57"/>
        <end position="62"/>
    </location>
</feature>
<feature type="strand" evidence="8">
    <location>
        <begin position="80"/>
        <end position="87"/>
    </location>
</feature>
<feature type="turn" evidence="8">
    <location>
        <begin position="90"/>
        <end position="92"/>
    </location>
</feature>
<feature type="strand" evidence="8">
    <location>
        <begin position="94"/>
        <end position="102"/>
    </location>
</feature>
<feature type="strand" evidence="8">
    <location>
        <begin position="116"/>
        <end position="121"/>
    </location>
</feature>
<feature type="strand" evidence="8">
    <location>
        <begin position="125"/>
        <end position="130"/>
    </location>
</feature>
<feature type="strand" evidence="8">
    <location>
        <begin position="132"/>
        <end position="135"/>
    </location>
</feature>
<feature type="strand" evidence="8">
    <location>
        <begin position="140"/>
        <end position="145"/>
    </location>
</feature>
<feature type="strand" evidence="8">
    <location>
        <begin position="147"/>
        <end position="150"/>
    </location>
</feature>
<feature type="strand" evidence="8">
    <location>
        <begin position="152"/>
        <end position="158"/>
    </location>
</feature>
<feature type="helix" evidence="8">
    <location>
        <begin position="167"/>
        <end position="170"/>
    </location>
</feature>
<feature type="strand" evidence="8">
    <location>
        <begin position="176"/>
        <end position="183"/>
    </location>
</feature>
<feature type="strand" evidence="8">
    <location>
        <begin position="192"/>
        <end position="199"/>
    </location>
</feature>
<feature type="strand" evidence="8">
    <location>
        <begin position="206"/>
        <end position="208"/>
    </location>
</feature>
<feature type="strand" evidence="8">
    <location>
        <begin position="214"/>
        <end position="219"/>
    </location>
</feature>
<feature type="strand" evidence="8">
    <location>
        <begin position="226"/>
        <end position="231"/>
    </location>
</feature>
<feature type="strand" evidence="8">
    <location>
        <begin position="233"/>
        <end position="235"/>
    </location>
</feature>
<feature type="strand" evidence="8">
    <location>
        <begin position="240"/>
        <end position="249"/>
    </location>
</feature>
<feature type="strand" evidence="8">
    <location>
        <begin position="252"/>
        <end position="258"/>
    </location>
</feature>
<feature type="strand" evidence="8">
    <location>
        <begin position="265"/>
        <end position="268"/>
    </location>
</feature>
<feature type="strand" evidence="8">
    <location>
        <begin position="272"/>
        <end position="275"/>
    </location>
</feature>
<feature type="strand" evidence="8">
    <location>
        <begin position="277"/>
        <end position="285"/>
    </location>
</feature>
<feature type="helix" evidence="8">
    <location>
        <begin position="288"/>
        <end position="290"/>
    </location>
</feature>
<feature type="strand" evidence="8">
    <location>
        <begin position="292"/>
        <end position="299"/>
    </location>
</feature>
<feature type="strand" evidence="8">
    <location>
        <begin position="316"/>
        <end position="321"/>
    </location>
</feature>
<feature type="strand" evidence="8">
    <location>
        <begin position="326"/>
        <end position="331"/>
    </location>
</feature>
<feature type="strand" evidence="8">
    <location>
        <begin position="333"/>
        <end position="336"/>
    </location>
</feature>
<feature type="strand" evidence="8">
    <location>
        <begin position="341"/>
        <end position="349"/>
    </location>
</feature>
<feature type="strand" evidence="8">
    <location>
        <begin position="352"/>
        <end position="358"/>
    </location>
</feature>
<feature type="strand" evidence="8">
    <location>
        <begin position="366"/>
        <end position="369"/>
    </location>
</feature>
<feature type="strand" evidence="8">
    <location>
        <begin position="374"/>
        <end position="383"/>
    </location>
</feature>
<feature type="helix" evidence="8">
    <location>
        <begin position="388"/>
        <end position="390"/>
    </location>
</feature>
<feature type="strand" evidence="8">
    <location>
        <begin position="392"/>
        <end position="399"/>
    </location>
</feature>
<feature type="strand" evidence="8">
    <location>
        <begin position="401"/>
        <end position="403"/>
    </location>
</feature>
<feature type="strand" evidence="8">
    <location>
        <begin position="406"/>
        <end position="408"/>
    </location>
</feature>
<feature type="strand" evidence="8">
    <location>
        <begin position="414"/>
        <end position="419"/>
    </location>
</feature>
<evidence type="ECO:0000250" key="1"/>
<evidence type="ECO:0000250" key="2">
    <source>
        <dbReference type="UniProtKB" id="Q8NHL6"/>
    </source>
</evidence>
<evidence type="ECO:0000255" key="3"/>
<evidence type="ECO:0000255" key="4">
    <source>
        <dbReference type="PROSITE-ProRule" id="PRU00114"/>
    </source>
</evidence>
<evidence type="ECO:0000256" key="5">
    <source>
        <dbReference type="SAM" id="MobiDB-lite"/>
    </source>
</evidence>
<evidence type="ECO:0000303" key="6">
    <source>
    </source>
</evidence>
<evidence type="ECO:0000305" key="7"/>
<evidence type="ECO:0007829" key="8">
    <source>
        <dbReference type="PDB" id="8GRX"/>
    </source>
</evidence>
<accession>Q6PI73</accession>
<comment type="function">
    <text evidence="1">May act as receptor for class I MHC antigens.</text>
</comment>
<comment type="subcellular location">
    <subcellularLocation>
        <location evidence="7">Membrane</location>
        <topology evidence="7">Single-pass type I membrane protein</topology>
    </subcellularLocation>
</comment>
<comment type="alternative products">
    <event type="alternative splicing"/>
    <isoform>
        <id>Q6PI73-1</id>
        <name>1</name>
        <sequence type="displayed"/>
    </isoform>
    <isoform>
        <id>Q6PI73-2</id>
        <name>2</name>
        <sequence type="described" ref="VSP_038149 VSP_038150"/>
    </isoform>
</comment>
<comment type="miscellaneous">
    <text>Belongs to the leukocyte receptor cluster (LRC) present on 19q13.4.</text>
</comment>
<comment type="miscellaneous">
    <molecule>Isoform 2</molecule>
    <text evidence="7">May be produced at very low levels due to a premature stop codon in the mRNA, leading to nonsense-mediated mRNA decay.</text>
</comment>
<keyword id="KW-0002">3D-structure</keyword>
<keyword id="KW-1064">Adaptive immunity</keyword>
<keyword id="KW-0025">Alternative splicing</keyword>
<keyword id="KW-1015">Disulfide bond</keyword>
<keyword id="KW-0325">Glycoprotein</keyword>
<keyword id="KW-0391">Immunity</keyword>
<keyword id="KW-0393">Immunoglobulin domain</keyword>
<keyword id="KW-0472">Membrane</keyword>
<keyword id="KW-1267">Proteomics identification</keyword>
<keyword id="KW-0675">Receptor</keyword>
<keyword id="KW-1185">Reference proteome</keyword>
<keyword id="KW-0677">Repeat</keyword>
<keyword id="KW-0732">Signal</keyword>
<keyword id="KW-0812">Transmembrane</keyword>
<keyword id="KW-1133">Transmembrane helix</keyword>
<gene>
    <name type="primary">LILRA6</name>
    <name type="synonym">ILT8</name>
</gene>
<reference key="1">
    <citation type="journal article" date="2004" name="Nature">
        <title>The DNA sequence and biology of human chromosome 19.</title>
        <authorList>
            <person name="Grimwood J."/>
            <person name="Gordon L.A."/>
            <person name="Olsen A.S."/>
            <person name="Terry A."/>
            <person name="Schmutz J."/>
            <person name="Lamerdin J.E."/>
            <person name="Hellsten U."/>
            <person name="Goodstein D."/>
            <person name="Couronne O."/>
            <person name="Tran-Gyamfi M."/>
            <person name="Aerts A."/>
            <person name="Altherr M."/>
            <person name="Ashworth L."/>
            <person name="Bajorek E."/>
            <person name="Black S."/>
            <person name="Branscomb E."/>
            <person name="Caenepeel S."/>
            <person name="Carrano A.V."/>
            <person name="Caoile C."/>
            <person name="Chan Y.M."/>
            <person name="Christensen M."/>
            <person name="Cleland C.A."/>
            <person name="Copeland A."/>
            <person name="Dalin E."/>
            <person name="Dehal P."/>
            <person name="Denys M."/>
            <person name="Detter J.C."/>
            <person name="Escobar J."/>
            <person name="Flowers D."/>
            <person name="Fotopulos D."/>
            <person name="Garcia C."/>
            <person name="Georgescu A.M."/>
            <person name="Glavina T."/>
            <person name="Gomez M."/>
            <person name="Gonzales E."/>
            <person name="Groza M."/>
            <person name="Hammon N."/>
            <person name="Hawkins T."/>
            <person name="Haydu L."/>
            <person name="Ho I."/>
            <person name="Huang W."/>
            <person name="Israni S."/>
            <person name="Jett J."/>
            <person name="Kadner K."/>
            <person name="Kimball H."/>
            <person name="Kobayashi A."/>
            <person name="Larionov V."/>
            <person name="Leem S.-H."/>
            <person name="Lopez F."/>
            <person name="Lou Y."/>
            <person name="Lowry S."/>
            <person name="Malfatti S."/>
            <person name="Martinez D."/>
            <person name="McCready P.M."/>
            <person name="Medina C."/>
            <person name="Morgan J."/>
            <person name="Nelson K."/>
            <person name="Nolan M."/>
            <person name="Ovcharenko I."/>
            <person name="Pitluck S."/>
            <person name="Pollard M."/>
            <person name="Popkie A.P."/>
            <person name="Predki P."/>
            <person name="Quan G."/>
            <person name="Ramirez L."/>
            <person name="Rash S."/>
            <person name="Retterer J."/>
            <person name="Rodriguez A."/>
            <person name="Rogers S."/>
            <person name="Salamov A."/>
            <person name="Salazar A."/>
            <person name="She X."/>
            <person name="Smith D."/>
            <person name="Slezak T."/>
            <person name="Solovyev V."/>
            <person name="Thayer N."/>
            <person name="Tice H."/>
            <person name="Tsai M."/>
            <person name="Ustaszewska A."/>
            <person name="Vo N."/>
            <person name="Wagner M."/>
            <person name="Wheeler J."/>
            <person name="Wu K."/>
            <person name="Xie G."/>
            <person name="Yang J."/>
            <person name="Dubchak I."/>
            <person name="Furey T.S."/>
            <person name="DeJong P."/>
            <person name="Dickson M."/>
            <person name="Gordon D."/>
            <person name="Eichler E.E."/>
            <person name="Pennacchio L.A."/>
            <person name="Richardson P."/>
            <person name="Stubbs L."/>
            <person name="Rokhsar D.S."/>
            <person name="Myers R.M."/>
            <person name="Rubin E.M."/>
            <person name="Lucas S.M."/>
        </authorList>
    </citation>
    <scope>NUCLEOTIDE SEQUENCE [LARGE SCALE GENOMIC DNA]</scope>
</reference>
<reference key="2">
    <citation type="journal article" date="2004" name="Genome Res.">
        <title>The status, quality, and expansion of the NIH full-length cDNA project: the Mammalian Gene Collection (MGC).</title>
        <authorList>
            <consortium name="The MGC Project Team"/>
        </authorList>
    </citation>
    <scope>NUCLEOTIDE SEQUENCE [LARGE SCALE MRNA] (ISOFORM 2)</scope>
</reference>
<reference key="3">
    <citation type="journal article" date="2000" name="Immunogenetics">
        <title>Extensive gene duplications and a large inversion characterize the human leukocyte receptor cluster.</title>
        <authorList>
            <person name="Wende H."/>
            <person name="Volz A."/>
            <person name="Ziegler A."/>
        </authorList>
    </citation>
    <scope>IDENTIFICATION IN THE LRC</scope>
</reference>
<reference key="4">
    <citation type="journal article" date="2001" name="Immunogenetics">
        <authorList>
            <person name="Wende H."/>
            <person name="Volz A."/>
            <person name="Ziegler A."/>
        </authorList>
    </citation>
    <scope>ERRATUM OF PUBMED:10941842</scope>
</reference>
<protein>
    <recommendedName>
        <fullName>Leukocyte immunoglobulin-like receptor subfamily A member 6</fullName>
    </recommendedName>
    <alternativeName>
        <fullName>Immunoglobulin-like transcript 8</fullName>
        <shortName>ILT-8</shortName>
    </alternativeName>
    <alternativeName>
        <fullName>Leukocyte Ig-like receptor</fullName>
    </alternativeName>
</protein>
<organism>
    <name type="scientific">Homo sapiens</name>
    <name type="common">Human</name>
    <dbReference type="NCBI Taxonomy" id="9606"/>
    <lineage>
        <taxon>Eukaryota</taxon>
        <taxon>Metazoa</taxon>
        <taxon>Chordata</taxon>
        <taxon>Craniata</taxon>
        <taxon>Vertebrata</taxon>
        <taxon>Euteleostomi</taxon>
        <taxon>Mammalia</taxon>
        <taxon>Eutheria</taxon>
        <taxon>Euarchontoglires</taxon>
        <taxon>Primates</taxon>
        <taxon>Haplorrhini</taxon>
        <taxon>Catarrhini</taxon>
        <taxon>Hominidae</taxon>
        <taxon>Homo</taxon>
    </lineage>
</organism>
<dbReference type="EMBL" id="AC010492">
    <property type="status" value="NOT_ANNOTATED_CDS"/>
    <property type="molecule type" value="Genomic_DNA"/>
</dbReference>
<dbReference type="EMBL" id="BC041708">
    <property type="status" value="NOT_ANNOTATED_CDS"/>
    <property type="molecule type" value="mRNA"/>
</dbReference>
<dbReference type="RefSeq" id="NP_001347096.1">
    <molecule id="Q6PI73-1"/>
    <property type="nucleotide sequence ID" value="NM_001360167.1"/>
</dbReference>
<dbReference type="PDB" id="8GRX">
    <property type="method" value="EM"/>
    <property type="resolution" value="3.00 A"/>
    <property type="chains" value="B/D=25-420"/>
</dbReference>
<dbReference type="PDBsum" id="8GRX"/>
<dbReference type="EMDB" id="EMD-34216"/>
<dbReference type="SMR" id="Q6PI73"/>
<dbReference type="BioGRID" id="116215">
    <property type="interactions" value="18"/>
</dbReference>
<dbReference type="FunCoup" id="Q6PI73">
    <property type="interactions" value="27"/>
</dbReference>
<dbReference type="IntAct" id="Q6PI73">
    <property type="interactions" value="1"/>
</dbReference>
<dbReference type="STRING" id="9606.ENSP00000379651"/>
<dbReference type="GlyCosmos" id="Q6PI73">
    <property type="glycosylation" value="3 sites, No reported glycans"/>
</dbReference>
<dbReference type="GlyGen" id="Q6PI73">
    <property type="glycosylation" value="6 sites"/>
</dbReference>
<dbReference type="iPTMnet" id="Q6PI73"/>
<dbReference type="PhosphoSitePlus" id="Q6PI73"/>
<dbReference type="BioMuta" id="LILRA6"/>
<dbReference type="DMDM" id="152032558"/>
<dbReference type="MassIVE" id="Q6PI73"/>
<dbReference type="PaxDb" id="9606-ENSP00000379651"/>
<dbReference type="PeptideAtlas" id="Q6PI73"/>
<dbReference type="ProteomicsDB" id="67141">
    <molecule id="Q6PI73-1"/>
</dbReference>
<dbReference type="ProteomicsDB" id="67142">
    <molecule id="Q6PI73-2"/>
</dbReference>
<dbReference type="Antibodypedia" id="58767">
    <property type="antibodies" value="102 antibodies from 13 providers"/>
</dbReference>
<dbReference type="DNASU" id="79168"/>
<dbReference type="Ensembl" id="ENST00000396365.7">
    <property type="protein sequence ID" value="ENSP00000379651.2"/>
    <property type="gene ID" value="ENSG00000244482.11"/>
</dbReference>
<dbReference type="Ensembl" id="ENST00000430421.5">
    <property type="protein sequence ID" value="ENSP00000412929.1"/>
    <property type="gene ID" value="ENSG00000244482.11"/>
</dbReference>
<dbReference type="Ensembl" id="ENST00000613333.4">
    <molecule id="Q6PI73-2"/>
    <property type="protein sequence ID" value="ENSP00000478128.1"/>
    <property type="gene ID" value="ENSG00000274148.6"/>
</dbReference>
<dbReference type="Ensembl" id="ENST00000614434.4">
    <molecule id="Q6PI73-2"/>
    <property type="protein sequence ID" value="ENSP00000484617.1"/>
    <property type="gene ID" value="ENSG00000275539.5"/>
</dbReference>
<dbReference type="Ensembl" id="ENST00000616720.4">
    <molecule id="Q6PI73-2"/>
    <property type="protein sequence ID" value="ENSP00000478896.1"/>
    <property type="gene ID" value="ENSG00000274148.6"/>
</dbReference>
<dbReference type="Ensembl" id="ENST00000621570.5">
    <molecule id="Q6PI73-1"/>
    <property type="protein sequence ID" value="ENSP00000480300.1"/>
    <property type="gene ID" value="ENSG00000274148.6"/>
</dbReference>
<dbReference type="GeneID" id="79168"/>
<dbReference type="MANE-Select" id="ENST00000396365.7">
    <property type="protein sequence ID" value="ENSP00000379651.2"/>
    <property type="RefSeq nucleotide sequence ID" value="NM_024318.5"/>
    <property type="RefSeq protein sequence ID" value="NP_077294.3"/>
</dbReference>
<dbReference type="UCSC" id="uc032ide.2">
    <molecule id="Q6PI73-1"/>
    <property type="organism name" value="human"/>
</dbReference>
<dbReference type="AGR" id="HGNC:15495"/>
<dbReference type="GeneCards" id="LILRA6"/>
<dbReference type="HGNC" id="HGNC:15495">
    <property type="gene designation" value="LILRA6"/>
</dbReference>
<dbReference type="HPA" id="ENSG00000244482">
    <property type="expression patterns" value="Tissue enhanced (lung, lymphoid tissue)"/>
</dbReference>
<dbReference type="neXtProt" id="NX_Q6PI73"/>
<dbReference type="PharmGKB" id="PA142671548"/>
<dbReference type="VEuPathDB" id="HostDB:ENSG00000244482"/>
<dbReference type="eggNOG" id="ENOG502RYEX">
    <property type="taxonomic scope" value="Eukaryota"/>
</dbReference>
<dbReference type="HOGENOM" id="CLU_021100_7_0_1"/>
<dbReference type="InParanoid" id="Q6PI73"/>
<dbReference type="OrthoDB" id="9427497at2759"/>
<dbReference type="PAN-GO" id="Q6PI73">
    <property type="GO annotations" value="3 GO annotations based on evolutionary models"/>
</dbReference>
<dbReference type="PhylomeDB" id="Q6PI73"/>
<dbReference type="TreeFam" id="TF336644"/>
<dbReference type="PathwayCommons" id="Q6PI73"/>
<dbReference type="Reactome" id="R-HSA-198933">
    <property type="pathway name" value="Immunoregulatory interactions between a Lymphoid and a non-Lymphoid cell"/>
</dbReference>
<dbReference type="SignaLink" id="Q6PI73"/>
<dbReference type="Pharos" id="Q6PI73">
    <property type="development level" value="Tbio"/>
</dbReference>
<dbReference type="PRO" id="PR:Q6PI73"/>
<dbReference type="Proteomes" id="UP000005640">
    <property type="component" value="Chromosome 19"/>
</dbReference>
<dbReference type="RNAct" id="Q6PI73">
    <property type="molecule type" value="protein"/>
</dbReference>
<dbReference type="Bgee" id="ENSG00000244482">
    <property type="expression patterns" value="Expressed in blood and 93 other cell types or tissues"/>
</dbReference>
<dbReference type="ExpressionAtlas" id="Q6PI73">
    <property type="expression patterns" value="baseline and differential"/>
</dbReference>
<dbReference type="GO" id="GO:0005886">
    <property type="term" value="C:plasma membrane"/>
    <property type="evidence" value="ECO:0000318"/>
    <property type="project" value="GO_Central"/>
</dbReference>
<dbReference type="GO" id="GO:0032396">
    <property type="term" value="F:inhibitory MHC class I receptor activity"/>
    <property type="evidence" value="ECO:0000318"/>
    <property type="project" value="GO_Central"/>
</dbReference>
<dbReference type="GO" id="GO:0002250">
    <property type="term" value="P:adaptive immune response"/>
    <property type="evidence" value="ECO:0007669"/>
    <property type="project" value="UniProtKB-KW"/>
</dbReference>
<dbReference type="GO" id="GO:0019221">
    <property type="term" value="P:cytokine-mediated signaling pathway"/>
    <property type="evidence" value="ECO:0000318"/>
    <property type="project" value="GO_Central"/>
</dbReference>
<dbReference type="GO" id="GO:0002764">
    <property type="term" value="P:immune response-regulating signaling pathway"/>
    <property type="evidence" value="ECO:0000318"/>
    <property type="project" value="GO_Central"/>
</dbReference>
<dbReference type="CDD" id="cd05751">
    <property type="entry name" value="IgC2_D1_LILR_KIR_like"/>
    <property type="match status" value="1"/>
</dbReference>
<dbReference type="FunFam" id="2.60.40.10:FF:000049">
    <property type="entry name" value="Leukocyte immunoglobulin-like receptor subfamily B member 1"/>
    <property type="match status" value="4"/>
</dbReference>
<dbReference type="Gene3D" id="2.60.40.10">
    <property type="entry name" value="Immunoglobulins"/>
    <property type="match status" value="4"/>
</dbReference>
<dbReference type="InterPro" id="IPR016332">
    <property type="entry name" value="A1B_glyco/leuk_Ig-like_rcpt"/>
</dbReference>
<dbReference type="InterPro" id="IPR007110">
    <property type="entry name" value="Ig-like_dom"/>
</dbReference>
<dbReference type="InterPro" id="IPR036179">
    <property type="entry name" value="Ig-like_dom_sf"/>
</dbReference>
<dbReference type="InterPro" id="IPR013783">
    <property type="entry name" value="Ig-like_fold"/>
</dbReference>
<dbReference type="InterPro" id="IPR050412">
    <property type="entry name" value="Ig-like_Receptors_ImmuneReg"/>
</dbReference>
<dbReference type="InterPro" id="IPR003599">
    <property type="entry name" value="Ig_sub"/>
</dbReference>
<dbReference type="InterPro" id="IPR003598">
    <property type="entry name" value="Ig_sub2"/>
</dbReference>
<dbReference type="InterPro" id="IPR013151">
    <property type="entry name" value="Immunoglobulin_dom"/>
</dbReference>
<dbReference type="PANTHER" id="PTHR11738:SF187">
    <property type="entry name" value="LEUKOCYTE IMMUNOGLOBULIN-LIKE RECEPTOR SUBFAMILY A MEMBER 6-RELATED"/>
    <property type="match status" value="1"/>
</dbReference>
<dbReference type="PANTHER" id="PTHR11738">
    <property type="entry name" value="MHC CLASS I NK CELL RECEPTOR"/>
    <property type="match status" value="1"/>
</dbReference>
<dbReference type="Pfam" id="PF00047">
    <property type="entry name" value="ig"/>
    <property type="match status" value="2"/>
</dbReference>
<dbReference type="Pfam" id="PF13895">
    <property type="entry name" value="Ig_2"/>
    <property type="match status" value="1"/>
</dbReference>
<dbReference type="PIRSF" id="PIRSF001979">
    <property type="entry name" value="Alpha_1B_glycoprot_prd"/>
    <property type="match status" value="1"/>
</dbReference>
<dbReference type="SMART" id="SM00409">
    <property type="entry name" value="IG"/>
    <property type="match status" value="3"/>
</dbReference>
<dbReference type="SMART" id="SM00408">
    <property type="entry name" value="IGc2"/>
    <property type="match status" value="3"/>
</dbReference>
<dbReference type="SUPFAM" id="SSF48726">
    <property type="entry name" value="Immunoglobulin"/>
    <property type="match status" value="4"/>
</dbReference>
<dbReference type="PROSITE" id="PS50835">
    <property type="entry name" value="IG_LIKE"/>
    <property type="match status" value="1"/>
</dbReference>
<sequence>MTPALTALLCLGLSLGPRTRVQAGPFPKPTLWAEPGSVISWGSPVTIWCQGSLEAQEYQLDKEGSPEPLDRNNPLEPKNKARFSIPSMTQHHAGRYRCHYYSSAGWSEPSDPLELVMTGFYNKPTLSALPSPVVASGGNMTLRCGSQKGYHHFVLMKEGEHQLPRTLDSQQLHSGGFQALFPVGPVTPSHRWRFTCYYYYTNTPRVWSHPSDPLEILPSGVSRKPSLLTLQGPVLAPGQSLTLQCGSDVGYDRFVLYKEGERDFLQRPGQQPQAGLSQANFTLGPVSPSHGGQYRCYGAHNLSSEWSAPSDPLNILMAGQIYDTVSLSAQPGPTVASGENVTLLCQSRGYFDTFLLTKEGAAHPPLRLRSMYGAHKYQAEFPMSPVTSAHAGTYRCYGSYSSNPHLLSFPSEPLELMVSGHSGGSSLPPTGPPSTPASHAKDYTVENLIRMGMAGLVLVFLGILLFEAQHSQRNPQDAAGR</sequence>
<proteinExistence type="evidence at protein level"/>
<name>LIRA6_HUMAN</name>